<name>RS18_AQUAE</name>
<reference key="1">
    <citation type="journal article" date="1998" name="Nature">
        <title>The complete genome of the hyperthermophilic bacterium Aquifex aeolicus.</title>
        <authorList>
            <person name="Deckert G."/>
            <person name="Warren P.V."/>
            <person name="Gaasterland T."/>
            <person name="Young W.G."/>
            <person name="Lenox A.L."/>
            <person name="Graham D.E."/>
            <person name="Overbeek R."/>
            <person name="Snead M.A."/>
            <person name="Keller M."/>
            <person name="Aujay M."/>
            <person name="Huber R."/>
            <person name="Feldman R.A."/>
            <person name="Short J.M."/>
            <person name="Olsen G.J."/>
            <person name="Swanson R.V."/>
        </authorList>
    </citation>
    <scope>NUCLEOTIDE SEQUENCE [LARGE SCALE GENOMIC DNA]</scope>
    <source>
        <strain>VF5</strain>
    </source>
</reference>
<dbReference type="EMBL" id="AE000657">
    <property type="protein sequence ID" value="AAC06446.1"/>
    <property type="molecule type" value="Genomic_DNA"/>
</dbReference>
<dbReference type="PIR" id="A70306">
    <property type="entry name" value="A70306"/>
</dbReference>
<dbReference type="RefSeq" id="NP_213036.1">
    <property type="nucleotide sequence ID" value="NC_000918.1"/>
</dbReference>
<dbReference type="RefSeq" id="WP_010879974.1">
    <property type="nucleotide sequence ID" value="NC_000918.1"/>
</dbReference>
<dbReference type="SMR" id="O66476"/>
<dbReference type="FunCoup" id="O66476">
    <property type="interactions" value="496"/>
</dbReference>
<dbReference type="STRING" id="224324.aq_064a"/>
<dbReference type="EnsemblBacteria" id="AAC06446">
    <property type="protein sequence ID" value="AAC06446"/>
    <property type="gene ID" value="aq_064a"/>
</dbReference>
<dbReference type="KEGG" id="aae:aq_064a"/>
<dbReference type="eggNOG" id="COG0238">
    <property type="taxonomic scope" value="Bacteria"/>
</dbReference>
<dbReference type="HOGENOM" id="CLU_148710_2_2_0"/>
<dbReference type="InParanoid" id="O66476"/>
<dbReference type="OrthoDB" id="9812008at2"/>
<dbReference type="Proteomes" id="UP000000798">
    <property type="component" value="Chromosome"/>
</dbReference>
<dbReference type="GO" id="GO:0022627">
    <property type="term" value="C:cytosolic small ribosomal subunit"/>
    <property type="evidence" value="ECO:0000318"/>
    <property type="project" value="GO_Central"/>
</dbReference>
<dbReference type="GO" id="GO:0070181">
    <property type="term" value="F:small ribosomal subunit rRNA binding"/>
    <property type="evidence" value="ECO:0000318"/>
    <property type="project" value="GO_Central"/>
</dbReference>
<dbReference type="GO" id="GO:0003735">
    <property type="term" value="F:structural constituent of ribosome"/>
    <property type="evidence" value="ECO:0000318"/>
    <property type="project" value="GO_Central"/>
</dbReference>
<dbReference type="GO" id="GO:0006412">
    <property type="term" value="P:translation"/>
    <property type="evidence" value="ECO:0000318"/>
    <property type="project" value="GO_Central"/>
</dbReference>
<dbReference type="FunFam" id="4.10.640.10:FF:000015">
    <property type="entry name" value="30S ribosomal protein S18"/>
    <property type="match status" value="1"/>
</dbReference>
<dbReference type="Gene3D" id="4.10.640.10">
    <property type="entry name" value="Ribosomal protein S18"/>
    <property type="match status" value="1"/>
</dbReference>
<dbReference type="HAMAP" id="MF_00270">
    <property type="entry name" value="Ribosomal_bS18"/>
    <property type="match status" value="1"/>
</dbReference>
<dbReference type="InterPro" id="IPR001648">
    <property type="entry name" value="Ribosomal_bS18"/>
</dbReference>
<dbReference type="InterPro" id="IPR036870">
    <property type="entry name" value="Ribosomal_bS18_sf"/>
</dbReference>
<dbReference type="NCBIfam" id="TIGR00165">
    <property type="entry name" value="S18"/>
    <property type="match status" value="1"/>
</dbReference>
<dbReference type="PANTHER" id="PTHR13479">
    <property type="entry name" value="30S RIBOSOMAL PROTEIN S18"/>
    <property type="match status" value="1"/>
</dbReference>
<dbReference type="PANTHER" id="PTHR13479:SF40">
    <property type="entry name" value="SMALL RIBOSOMAL SUBUNIT PROTEIN BS18M"/>
    <property type="match status" value="1"/>
</dbReference>
<dbReference type="Pfam" id="PF01084">
    <property type="entry name" value="Ribosomal_S18"/>
    <property type="match status" value="1"/>
</dbReference>
<dbReference type="PRINTS" id="PR00974">
    <property type="entry name" value="RIBOSOMALS18"/>
</dbReference>
<dbReference type="SUPFAM" id="SSF46911">
    <property type="entry name" value="Ribosomal protein S18"/>
    <property type="match status" value="1"/>
</dbReference>
<comment type="function">
    <text evidence="1">Binds as a heterodimer with protein bS6 to the central domain of the 16S rRNA, where it helps stabilize the platform of the 30S subunit.</text>
</comment>
<comment type="subunit">
    <text evidence="1">Part of the 30S ribosomal subunit. Forms a tight heterodimer with protein bS6.</text>
</comment>
<comment type="similarity">
    <text evidence="1">Belongs to the bacterial ribosomal protein bS18 family.</text>
</comment>
<gene>
    <name evidence="1" type="primary">rpsR</name>
    <name type="ordered locus">aq_064.1</name>
    <name type="ORF">aq_064A</name>
</gene>
<accession>O66476</accession>
<organism>
    <name type="scientific">Aquifex aeolicus (strain VF5)</name>
    <dbReference type="NCBI Taxonomy" id="224324"/>
    <lineage>
        <taxon>Bacteria</taxon>
        <taxon>Pseudomonadati</taxon>
        <taxon>Aquificota</taxon>
        <taxon>Aquificia</taxon>
        <taxon>Aquificales</taxon>
        <taxon>Aquificaceae</taxon>
        <taxon>Aquifex</taxon>
    </lineage>
</organism>
<feature type="chain" id="PRO_0000111107" description="Small ribosomal subunit protein bS18">
    <location>
        <begin position="1"/>
        <end position="72"/>
    </location>
</feature>
<protein>
    <recommendedName>
        <fullName evidence="1">Small ribosomal subunit protein bS18</fullName>
    </recommendedName>
    <alternativeName>
        <fullName evidence="2">30S ribosomal protein S18</fullName>
    </alternativeName>
</protein>
<keyword id="KW-1185">Reference proteome</keyword>
<keyword id="KW-0687">Ribonucleoprotein</keyword>
<keyword id="KW-0689">Ribosomal protein</keyword>
<keyword id="KW-0694">RNA-binding</keyword>
<keyword id="KW-0699">rRNA-binding</keyword>
<proteinExistence type="inferred from homology"/>
<evidence type="ECO:0000255" key="1">
    <source>
        <dbReference type="HAMAP-Rule" id="MF_00270"/>
    </source>
</evidence>
<evidence type="ECO:0000305" key="2"/>
<sequence>MVVRAPKKKVCMYCEQKREPDYKNYEELRNFLTERGRIKDRKQTGLCAKHQRRLAVQIKRARQLGLLPYVVY</sequence>